<comment type="function">
    <text evidence="2 5 8">Component of the 26S proteasome, a multiprotein complex involved in the ATP-dependent degradation of ubiquitinated proteins. This complex plays a key role in the maintenance of protein homeostasis by removing misfolded or damaged proteins, which could impair cellular functions, and by removing proteins whose functions are no longer required. Therefore, the proteasome participates in numerous cellular processes, including cell cycle progression, apoptosis, or DNA damage repair. The PSMD14 subunit is a metalloprotease that specifically cleaves 'Lys-63'-linked polyubiquitin chains within the complex. Plays a role in response to double-strand breaks (DSBs): acts as a regulator of non-homologous end joining (NHEJ) by cleaving 'Lys-63'-linked polyubiquitin, thereby promoting retention of JMJD2A/KDM4A on chromatin and restricting TP53BP1 accumulation. Also involved in homologous recombination repair by promoting RAD51 loading.</text>
</comment>
<comment type="subunit">
    <text evidence="3 4 6 7">Component of the 19S proteasome regulatory particle complex. The 26S proteasome consists of a 20S core particle (CP) and two 19S regulatory subunits (RP). The regulatory particle is made of a lid composed of 9 subunits including PSMD4, a base containing 6 ATPases and few additional components (PubMed:27342858, PubMed:27428775). Within the complex, PSMD4 interacts with subunit PSMD7 through their respective MPN domain. Interacts with TXNL1 (PubMed:19349277).</text>
</comment>
<comment type="interaction">
    <interactant intactId="EBI-722193">
        <id>O00487</id>
    </interactant>
    <interactant intactId="EBI-744973">
        <id>Q9C005</id>
        <label>DPY30</label>
    </interactant>
    <organismsDiffer>false</organismsDiffer>
    <experiments>6</experiments>
</comment>
<comment type="interaction">
    <interactant intactId="EBI-722193">
        <id>O00487</id>
    </interactant>
    <interactant intactId="EBI-10175124">
        <id>Q8IZU0</id>
        <label>FAM9B</label>
    </interactant>
    <organismsDiffer>false</organismsDiffer>
    <experiments>3</experiments>
</comment>
<comment type="interaction">
    <interactant intactId="EBI-722193">
        <id>O00487</id>
    </interactant>
    <interactant intactId="EBI-466029">
        <id>P42858</id>
        <label>HTT</label>
    </interactant>
    <organismsDiffer>false</organismsDiffer>
    <experiments>7</experiments>
</comment>
<comment type="interaction">
    <interactant intactId="EBI-722193">
        <id>O00487</id>
    </interactant>
    <interactant intactId="EBI-748397">
        <id>P50222</id>
        <label>MEOX2</label>
    </interactant>
    <organismsDiffer>false</organismsDiffer>
    <experiments>3</experiments>
</comment>
<comment type="interaction">
    <interactant intactId="EBI-722193">
        <id>O00487</id>
    </interactant>
    <interactant intactId="EBI-357659">
        <id>P51665</id>
        <label>PSMD7</label>
    </interactant>
    <organismsDiffer>false</organismsDiffer>
    <experiments>16</experiments>
</comment>
<comment type="interaction">
    <interactant intactId="EBI-722193">
        <id>O00487</id>
    </interactant>
    <interactant intactId="EBI-25475853">
        <id>P0DTC5</id>
        <label>M</label>
    </interactant>
    <organismsDiffer>true</organismsDiffer>
    <experiments>2</experiments>
</comment>
<comment type="tissue specificity">
    <text evidence="8">Widely expressed. Highest levels in heart and skeletal muscle.</text>
</comment>
<comment type="similarity">
    <text evidence="9">Belongs to the peptidase M67A family. PSMD14 subfamily.</text>
</comment>
<sequence length="310" mass="34577">MDRLLRLGGGMPGLGQGPPTDAPAVDTAEQVYISSLALLKMLKHGRAGVPMEVMGLMLGEFVDDYTVRVIDVFAMPQSGTGVSVEAVDPVFQAKMLDMLKQTGRPEMVVGWYHSHPGFGCWLSGVDINTQQSFEALSERAVAVVVDPIQSVKGKVVIDAFRLINANMMVLGHEPRQTTSNLGHLNKPSIQALIHGLNRHYYSITINYRKNELEQKMLLNLHKKSWMEGLTLQDYSEHCKHNESVVKEMLELAKNYNKAVEEEDKMTPEQLAIKNVGKQDPKRHLEEHVDVLMTSNIVQCLAAMLDTVVFK</sequence>
<reference key="1">
    <citation type="journal article" date="1997" name="J. Biol. Chem.">
        <title>Resistance to diverse drugs and ultraviolet light conferred by overexpression of a novel human 26 S proteasome subunit.</title>
        <authorList>
            <person name="Spataro V."/>
            <person name="Toda T."/>
            <person name="Craig R."/>
            <person name="Seeger M."/>
            <person name="Dubiel W."/>
            <person name="Harris A.L."/>
            <person name="Norbury C."/>
        </authorList>
    </citation>
    <scope>NUCLEOTIDE SEQUENCE [MRNA]</scope>
    <scope>FUNCTION</scope>
    <scope>TISSUE SPECIFICITY</scope>
    <source>
        <tissue>Lung</tissue>
    </source>
</reference>
<reference key="2">
    <citation type="journal article" date="2004" name="Nat. Genet.">
        <title>Complete sequencing and characterization of 21,243 full-length human cDNAs.</title>
        <authorList>
            <person name="Ota T."/>
            <person name="Suzuki Y."/>
            <person name="Nishikawa T."/>
            <person name="Otsuki T."/>
            <person name="Sugiyama T."/>
            <person name="Irie R."/>
            <person name="Wakamatsu A."/>
            <person name="Hayashi K."/>
            <person name="Sato H."/>
            <person name="Nagai K."/>
            <person name="Kimura K."/>
            <person name="Makita H."/>
            <person name="Sekine M."/>
            <person name="Obayashi M."/>
            <person name="Nishi T."/>
            <person name="Shibahara T."/>
            <person name="Tanaka T."/>
            <person name="Ishii S."/>
            <person name="Yamamoto J."/>
            <person name="Saito K."/>
            <person name="Kawai Y."/>
            <person name="Isono Y."/>
            <person name="Nakamura Y."/>
            <person name="Nagahari K."/>
            <person name="Murakami K."/>
            <person name="Yasuda T."/>
            <person name="Iwayanagi T."/>
            <person name="Wagatsuma M."/>
            <person name="Shiratori A."/>
            <person name="Sudo H."/>
            <person name="Hosoiri T."/>
            <person name="Kaku Y."/>
            <person name="Kodaira H."/>
            <person name="Kondo H."/>
            <person name="Sugawara M."/>
            <person name="Takahashi M."/>
            <person name="Kanda K."/>
            <person name="Yokoi T."/>
            <person name="Furuya T."/>
            <person name="Kikkawa E."/>
            <person name="Omura Y."/>
            <person name="Abe K."/>
            <person name="Kamihara K."/>
            <person name="Katsuta N."/>
            <person name="Sato K."/>
            <person name="Tanikawa M."/>
            <person name="Yamazaki M."/>
            <person name="Ninomiya K."/>
            <person name="Ishibashi T."/>
            <person name="Yamashita H."/>
            <person name="Murakawa K."/>
            <person name="Fujimori K."/>
            <person name="Tanai H."/>
            <person name="Kimata M."/>
            <person name="Watanabe M."/>
            <person name="Hiraoka S."/>
            <person name="Chiba Y."/>
            <person name="Ishida S."/>
            <person name="Ono Y."/>
            <person name="Takiguchi S."/>
            <person name="Watanabe S."/>
            <person name="Yosida M."/>
            <person name="Hotuta T."/>
            <person name="Kusano J."/>
            <person name="Kanehori K."/>
            <person name="Takahashi-Fujii A."/>
            <person name="Hara H."/>
            <person name="Tanase T.-O."/>
            <person name="Nomura Y."/>
            <person name="Togiya S."/>
            <person name="Komai F."/>
            <person name="Hara R."/>
            <person name="Takeuchi K."/>
            <person name="Arita M."/>
            <person name="Imose N."/>
            <person name="Musashino K."/>
            <person name="Yuuki H."/>
            <person name="Oshima A."/>
            <person name="Sasaki N."/>
            <person name="Aotsuka S."/>
            <person name="Yoshikawa Y."/>
            <person name="Matsunawa H."/>
            <person name="Ichihara T."/>
            <person name="Shiohata N."/>
            <person name="Sano S."/>
            <person name="Moriya S."/>
            <person name="Momiyama H."/>
            <person name="Satoh N."/>
            <person name="Takami S."/>
            <person name="Terashima Y."/>
            <person name="Suzuki O."/>
            <person name="Nakagawa S."/>
            <person name="Senoh A."/>
            <person name="Mizoguchi H."/>
            <person name="Goto Y."/>
            <person name="Shimizu F."/>
            <person name="Wakebe H."/>
            <person name="Hishigaki H."/>
            <person name="Watanabe T."/>
            <person name="Sugiyama A."/>
            <person name="Takemoto M."/>
            <person name="Kawakami B."/>
            <person name="Yamazaki M."/>
            <person name="Watanabe K."/>
            <person name="Kumagai A."/>
            <person name="Itakura S."/>
            <person name="Fukuzumi Y."/>
            <person name="Fujimori Y."/>
            <person name="Komiyama M."/>
            <person name="Tashiro H."/>
            <person name="Tanigami A."/>
            <person name="Fujiwara T."/>
            <person name="Ono T."/>
            <person name="Yamada K."/>
            <person name="Fujii Y."/>
            <person name="Ozaki K."/>
            <person name="Hirao M."/>
            <person name="Ohmori Y."/>
            <person name="Kawabata A."/>
            <person name="Hikiji T."/>
            <person name="Kobatake N."/>
            <person name="Inagaki H."/>
            <person name="Ikema Y."/>
            <person name="Okamoto S."/>
            <person name="Okitani R."/>
            <person name="Kawakami T."/>
            <person name="Noguchi S."/>
            <person name="Itoh T."/>
            <person name="Shigeta K."/>
            <person name="Senba T."/>
            <person name="Matsumura K."/>
            <person name="Nakajima Y."/>
            <person name="Mizuno T."/>
            <person name="Morinaga M."/>
            <person name="Sasaki M."/>
            <person name="Togashi T."/>
            <person name="Oyama M."/>
            <person name="Hata H."/>
            <person name="Watanabe M."/>
            <person name="Komatsu T."/>
            <person name="Mizushima-Sugano J."/>
            <person name="Satoh T."/>
            <person name="Shirai Y."/>
            <person name="Takahashi Y."/>
            <person name="Nakagawa K."/>
            <person name="Okumura K."/>
            <person name="Nagase T."/>
            <person name="Nomura N."/>
            <person name="Kikuchi H."/>
            <person name="Masuho Y."/>
            <person name="Yamashita R."/>
            <person name="Nakai K."/>
            <person name="Yada T."/>
            <person name="Nakamura Y."/>
            <person name="Ohara O."/>
            <person name="Isogai T."/>
            <person name="Sugano S."/>
        </authorList>
    </citation>
    <scope>NUCLEOTIDE SEQUENCE [LARGE SCALE MRNA]</scope>
    <source>
        <tissue>Brain</tissue>
    </source>
</reference>
<reference key="3">
    <citation type="submission" date="2005-09" db="EMBL/GenBank/DDBJ databases">
        <authorList>
            <person name="Mural R.J."/>
            <person name="Istrail S."/>
            <person name="Sutton G.G."/>
            <person name="Florea L."/>
            <person name="Halpern A.L."/>
            <person name="Mobarry C.M."/>
            <person name="Lippert R."/>
            <person name="Walenz B."/>
            <person name="Shatkay H."/>
            <person name="Dew I."/>
            <person name="Miller J.R."/>
            <person name="Flanigan M.J."/>
            <person name="Edwards N.J."/>
            <person name="Bolanos R."/>
            <person name="Fasulo D."/>
            <person name="Halldorsson B.V."/>
            <person name="Hannenhalli S."/>
            <person name="Turner R."/>
            <person name="Yooseph S."/>
            <person name="Lu F."/>
            <person name="Nusskern D.R."/>
            <person name="Shue B.C."/>
            <person name="Zheng X.H."/>
            <person name="Zhong F."/>
            <person name="Delcher A.L."/>
            <person name="Huson D.H."/>
            <person name="Kravitz S.A."/>
            <person name="Mouchard L."/>
            <person name="Reinert K."/>
            <person name="Remington K.A."/>
            <person name="Clark A.G."/>
            <person name="Waterman M.S."/>
            <person name="Eichler E.E."/>
            <person name="Adams M.D."/>
            <person name="Hunkapiller M.W."/>
            <person name="Myers E.W."/>
            <person name="Venter J.C."/>
        </authorList>
    </citation>
    <scope>NUCLEOTIDE SEQUENCE [LARGE SCALE GENOMIC DNA]</scope>
</reference>
<reference key="4">
    <citation type="journal article" date="2004" name="Genome Res.">
        <title>The status, quality, and expansion of the NIH full-length cDNA project: the Mammalian Gene Collection (MGC).</title>
        <authorList>
            <consortium name="The MGC Project Team"/>
        </authorList>
    </citation>
    <scope>NUCLEOTIDE SEQUENCE [LARGE SCALE MRNA]</scope>
    <source>
        <tissue>Testis</tissue>
    </source>
</reference>
<reference key="5">
    <citation type="submission" date="2007-03" db="UniProtKB">
        <authorList>
            <person name="Lubec G."/>
            <person name="Afjehi-Sadat L."/>
        </authorList>
    </citation>
    <scope>PROTEIN SEQUENCE OF 199-208</scope>
    <scope>IDENTIFICATION BY MASS SPECTROMETRY</scope>
    <source>
        <tissue>Brain</tissue>
        <tissue>Cajal-Retzius cell</tissue>
    </source>
</reference>
<reference key="6">
    <citation type="journal article" date="1992" name="Eur. J. Biochem.">
        <title>Demonstration that a human 26S proteolytic complex consists of a proteasome and multiple associated protein components and hydrolyzes ATP and ubiquitin-ligated proteins by closely linked mechanisms.</title>
        <authorList>
            <person name="Kanayama H.O."/>
            <person name="Tamura T."/>
            <person name="Ugai S."/>
            <person name="Kagawa S."/>
            <person name="Tanahashi N."/>
            <person name="Yoshimura T."/>
            <person name="Tanaka K."/>
            <person name="Ichihara A."/>
        </authorList>
    </citation>
    <scope>FUNCTION</scope>
</reference>
<reference key="7">
    <citation type="journal article" date="2007" name="Biochemistry">
        <title>Mass spectrometric characterization of the affinity-purified human 26S proteasome complex.</title>
        <authorList>
            <person name="Wang X."/>
            <person name="Chen C.-F."/>
            <person name="Baker P.R."/>
            <person name="Chen P.-L."/>
            <person name="Kaiser P."/>
            <person name="Huang L."/>
        </authorList>
    </citation>
    <scope>PHOSPHORYLATION [LARGE SCALE ANALYSIS] AT SER-224</scope>
    <scope>IDENTIFICATION BY MASS SPECTROMETRY [LARGE SCALE ANALYSIS]</scope>
    <source>
        <tissue>Embryonic kidney</tissue>
    </source>
</reference>
<reference key="8">
    <citation type="journal article" date="2007" name="Mol. Cell. Proteomics">
        <title>Quantitative phosphoproteome profiling of Wnt3a-mediated signaling network: indicating the involvement of ribonucleoside-diphosphate reductase M2 subunit phosphorylation at residue serine 20 in canonical Wnt signal transduction.</title>
        <authorList>
            <person name="Tang L.-Y."/>
            <person name="Deng N."/>
            <person name="Wang L.-S."/>
            <person name="Dai J."/>
            <person name="Wang Z.-L."/>
            <person name="Jiang X.-S."/>
            <person name="Li S.-J."/>
            <person name="Li L."/>
            <person name="Sheng Q.-H."/>
            <person name="Wu D.-Q."/>
            <person name="Li L."/>
            <person name="Zeng R."/>
        </authorList>
    </citation>
    <scope>PHOSPHORYLATION [LARGE SCALE ANALYSIS] AT SER-150</scope>
    <scope>IDENTIFICATION BY MASS SPECTROMETRY [LARGE SCALE ANALYSIS]</scope>
    <source>
        <tissue>Embryonic kidney</tissue>
    </source>
</reference>
<reference key="9">
    <citation type="journal article" date="2009" name="EMBO J.">
        <title>K63-specific deubiquitination by two JAMM/MPN+ complexes: BRISC-associated Brcc36 and proteasomal Poh1.</title>
        <authorList>
            <person name="Cooper E.M."/>
            <person name="Cutcliffe C."/>
            <person name="Kristiansen T.Z."/>
            <person name="Pandey A."/>
            <person name="Pickart C.M."/>
            <person name="Cohen R.E."/>
        </authorList>
    </citation>
    <scope>PROBABLE FUNCTION</scope>
    <scope>IDENTIFICATION IN THE PROTEASOME</scope>
</reference>
<reference key="10">
    <citation type="journal article" date="2009" name="J. Biol. Chem.">
        <title>Thioredoxin Txnl1/TRP32 is a redox-active cofactor of the 26 S proteasome.</title>
        <authorList>
            <person name="Andersen K.M."/>
            <person name="Madsen L."/>
            <person name="Prag S."/>
            <person name="Johnsen A.H."/>
            <person name="Semple C.A."/>
            <person name="Hendil K.B."/>
            <person name="Hartmann-Petersen R."/>
        </authorList>
    </citation>
    <scope>INTERACTION WITH TXNL1</scope>
</reference>
<reference key="11">
    <citation type="journal article" date="2009" name="Sci. Signal.">
        <title>Quantitative phosphoproteomic analysis of T cell receptor signaling reveals system-wide modulation of protein-protein interactions.</title>
        <authorList>
            <person name="Mayya V."/>
            <person name="Lundgren D.H."/>
            <person name="Hwang S.-I."/>
            <person name="Rezaul K."/>
            <person name="Wu L."/>
            <person name="Eng J.K."/>
            <person name="Rodionov V."/>
            <person name="Han D.K."/>
        </authorList>
    </citation>
    <scope>IDENTIFICATION BY MASS SPECTROMETRY [LARGE SCALE ANALYSIS]</scope>
    <source>
        <tissue>Leukemic T-cell</tissue>
    </source>
</reference>
<reference key="12">
    <citation type="journal article" date="2011" name="BMC Syst. Biol.">
        <title>Initial characterization of the human central proteome.</title>
        <authorList>
            <person name="Burkard T.R."/>
            <person name="Planyavsky M."/>
            <person name="Kaupe I."/>
            <person name="Breitwieser F.P."/>
            <person name="Buerckstuemmer T."/>
            <person name="Bennett K.L."/>
            <person name="Superti-Furga G."/>
            <person name="Colinge J."/>
        </authorList>
    </citation>
    <scope>IDENTIFICATION BY MASS SPECTROMETRY [LARGE SCALE ANALYSIS]</scope>
</reference>
<reference key="13">
    <citation type="journal article" date="2012" name="EMBO J.">
        <title>The proteasomal de-ubiquitinating enzyme POH1 promotes the double-strand DNA break response.</title>
        <authorList>
            <person name="Butler L.R."/>
            <person name="Densham R.M."/>
            <person name="Jia J."/>
            <person name="Garvin A.J."/>
            <person name="Stone H.R."/>
            <person name="Shah V."/>
            <person name="Weekes D."/>
            <person name="Festy F."/>
            <person name="Beesley J."/>
            <person name="Morris J.R."/>
        </authorList>
    </citation>
    <scope>FUNCTION</scope>
    <scope>IDENTIFICATION IN THE PROTEASOME</scope>
    <scope>MUTAGENESIS OF 113-HIS--HIS-115</scope>
</reference>
<reference key="14">
    <citation type="journal article" date="2013" name="J. Proteome Res.">
        <title>Toward a comprehensive characterization of a human cancer cell phosphoproteome.</title>
        <authorList>
            <person name="Zhou H."/>
            <person name="Di Palma S."/>
            <person name="Preisinger C."/>
            <person name="Peng M."/>
            <person name="Polat A.N."/>
            <person name="Heck A.J."/>
            <person name="Mohammed S."/>
        </authorList>
    </citation>
    <scope>PHOSPHORYLATION [LARGE SCALE ANALYSIS] AT THR-266</scope>
    <scope>IDENTIFICATION BY MASS SPECTROMETRY [LARGE SCALE ANALYSIS]</scope>
    <source>
        <tissue>Cervix carcinoma</tissue>
        <tissue>Erythroleukemia</tissue>
    </source>
</reference>
<reference key="15">
    <citation type="journal article" date="2014" name="J. Proteomics">
        <title>An enzyme assisted RP-RPLC approach for in-depth analysis of human liver phosphoproteome.</title>
        <authorList>
            <person name="Bian Y."/>
            <person name="Song C."/>
            <person name="Cheng K."/>
            <person name="Dong M."/>
            <person name="Wang F."/>
            <person name="Huang J."/>
            <person name="Sun D."/>
            <person name="Wang L."/>
            <person name="Ye M."/>
            <person name="Zou H."/>
        </authorList>
    </citation>
    <scope>PHOSPHORYLATION [LARGE SCALE ANALYSIS] AT SER-150</scope>
    <scope>IDENTIFICATION BY MASS SPECTROMETRY [LARGE SCALE ANALYSIS]</scope>
    <source>
        <tissue>Liver</tissue>
    </source>
</reference>
<reference key="16">
    <citation type="journal article" date="2016" name="Nat. Struct. Mol. Biol.">
        <title>An atomic structure of the human 26S proteasome.</title>
        <authorList>
            <person name="Huang X."/>
            <person name="Luan B."/>
            <person name="Wu J."/>
            <person name="Shi Y."/>
        </authorList>
    </citation>
    <scope>STRUCTURE BY ELECTRON MICROSCOPY (3.50 ANGSTROMS)</scope>
    <scope>SUBUNIT</scope>
</reference>
<reference key="17">
    <citation type="journal article" date="2016" name="Proc. Natl. Acad. Sci. U.S.A.">
        <title>Structure of the human 26S proteasome at a resolution of 3.9 Aa.</title>
        <authorList>
            <person name="Schweitzer A."/>
            <person name="Aufderheide A."/>
            <person name="Rudack T."/>
            <person name="Beck F."/>
            <person name="Pfeifer G."/>
            <person name="Plitzko J.M."/>
            <person name="Sakata E."/>
            <person name="Schulten K."/>
            <person name="Foerster F."/>
            <person name="Baumeister W."/>
        </authorList>
    </citation>
    <scope>STRUCTURE BY ELECTRON MICROSCOPY (4.50 ANGSTROMS)</scope>
    <scope>SUBUNIT</scope>
</reference>
<proteinExistence type="evidence at protein level"/>
<feature type="chain" id="PRO_0000213952" description="26S proteasome non-ATPase regulatory subunit 14">
    <location>
        <begin position="1"/>
        <end position="310"/>
    </location>
</feature>
<feature type="domain" description="MPN" evidence="1">
    <location>
        <begin position="31"/>
        <end position="166"/>
    </location>
</feature>
<feature type="short sequence motif" description="JAMM motif" evidence="1">
    <location>
        <begin position="113"/>
        <end position="126"/>
    </location>
</feature>
<feature type="binding site" evidence="1">
    <location>
        <position position="113"/>
    </location>
    <ligand>
        <name>Zn(2+)</name>
        <dbReference type="ChEBI" id="CHEBI:29105"/>
        <note>catalytic</note>
    </ligand>
</feature>
<feature type="binding site" evidence="1">
    <location>
        <position position="115"/>
    </location>
    <ligand>
        <name>Zn(2+)</name>
        <dbReference type="ChEBI" id="CHEBI:29105"/>
        <note>catalytic</note>
    </ligand>
</feature>
<feature type="binding site" evidence="1">
    <location>
        <position position="126"/>
    </location>
    <ligand>
        <name>Zn(2+)</name>
        <dbReference type="ChEBI" id="CHEBI:29105"/>
        <note>catalytic</note>
    </ligand>
</feature>
<feature type="modified residue" description="Phosphoserine" evidence="11 13">
    <location>
        <position position="150"/>
    </location>
</feature>
<feature type="modified residue" description="Phosphoserine" evidence="10">
    <location>
        <position position="224"/>
    </location>
</feature>
<feature type="modified residue" description="Phosphothreonine" evidence="12">
    <location>
        <position position="266"/>
    </location>
</feature>
<feature type="mutagenesis site" description="Abolishes ubiquitin thioesterase activity, leading to prevent maintenance of JMJD2A/KDM4A on chromatin." evidence="5">
    <original>HSH</original>
    <variation>ASA</variation>
    <location>
        <begin position="113"/>
        <end position="115"/>
    </location>
</feature>
<feature type="strand" evidence="14">
    <location>
        <begin position="30"/>
        <end position="33"/>
    </location>
</feature>
<feature type="helix" evidence="14">
    <location>
        <begin position="35"/>
        <end position="47"/>
    </location>
</feature>
<feature type="turn" evidence="14">
    <location>
        <begin position="48"/>
        <end position="50"/>
    </location>
</feature>
<feature type="strand" evidence="14">
    <location>
        <begin position="54"/>
        <end position="63"/>
    </location>
</feature>
<feature type="strand" evidence="14">
    <location>
        <begin position="66"/>
        <end position="75"/>
    </location>
</feature>
<feature type="helix" evidence="14">
    <location>
        <begin position="84"/>
        <end position="86"/>
    </location>
</feature>
<feature type="helix" evidence="14">
    <location>
        <begin position="89"/>
        <end position="102"/>
    </location>
</feature>
<feature type="strand" evidence="14">
    <location>
        <begin position="107"/>
        <end position="113"/>
    </location>
</feature>
<feature type="turn" evidence="14">
    <location>
        <begin position="116"/>
        <end position="118"/>
    </location>
</feature>
<feature type="helix" evidence="14">
    <location>
        <begin position="124"/>
        <end position="136"/>
    </location>
</feature>
<feature type="strand" evidence="14">
    <location>
        <begin position="141"/>
        <end position="143"/>
    </location>
</feature>
<feature type="turn" evidence="14">
    <location>
        <begin position="147"/>
        <end position="149"/>
    </location>
</feature>
<feature type="strand" evidence="14">
    <location>
        <begin position="159"/>
        <end position="162"/>
    </location>
</feature>
<feature type="helix" evidence="14">
    <location>
        <begin position="165"/>
        <end position="168"/>
    </location>
</feature>
<feature type="strand" evidence="14">
    <location>
        <begin position="181"/>
        <end position="184"/>
    </location>
</feature>
<feature type="helix" evidence="14">
    <location>
        <begin position="189"/>
        <end position="192"/>
    </location>
</feature>
<feature type="turn" evidence="14">
    <location>
        <begin position="193"/>
        <end position="195"/>
    </location>
</feature>
<feature type="turn" evidence="14">
    <location>
        <begin position="197"/>
        <end position="199"/>
    </location>
</feature>
<feature type="strand" evidence="14">
    <location>
        <begin position="200"/>
        <end position="207"/>
    </location>
</feature>
<feature type="turn" evidence="14">
    <location>
        <begin position="211"/>
        <end position="213"/>
    </location>
</feature>
<feature type="helix" evidence="14">
    <location>
        <begin position="214"/>
        <end position="217"/>
    </location>
</feature>
<feature type="helix" evidence="14">
    <location>
        <begin position="218"/>
        <end position="221"/>
    </location>
</feature>
<feature type="turn" evidence="14">
    <location>
        <begin position="227"/>
        <end position="229"/>
    </location>
</feature>
<feature type="helix" evidence="14">
    <location>
        <begin position="234"/>
        <end position="261"/>
    </location>
</feature>
<feature type="helix" evidence="14">
    <location>
        <begin position="267"/>
        <end position="273"/>
    </location>
</feature>
<feature type="turn" evidence="14">
    <location>
        <begin position="279"/>
        <end position="285"/>
    </location>
</feature>
<feature type="helix" evidence="14">
    <location>
        <begin position="286"/>
        <end position="308"/>
    </location>
</feature>
<organism>
    <name type="scientific">Homo sapiens</name>
    <name type="common">Human</name>
    <dbReference type="NCBI Taxonomy" id="9606"/>
    <lineage>
        <taxon>Eukaryota</taxon>
        <taxon>Metazoa</taxon>
        <taxon>Chordata</taxon>
        <taxon>Craniata</taxon>
        <taxon>Vertebrata</taxon>
        <taxon>Euteleostomi</taxon>
        <taxon>Mammalia</taxon>
        <taxon>Eutheria</taxon>
        <taxon>Euarchontoglires</taxon>
        <taxon>Primates</taxon>
        <taxon>Haplorrhini</taxon>
        <taxon>Catarrhini</taxon>
        <taxon>Hominidae</taxon>
        <taxon>Homo</taxon>
    </lineage>
</organism>
<accession>O00487</accession>
<accession>B3KNW2</accession>
<accession>O00176</accession>
<evidence type="ECO:0000255" key="1">
    <source>
        <dbReference type="PROSITE-ProRule" id="PRU01182"/>
    </source>
</evidence>
<evidence type="ECO:0000269" key="2">
    <source>
    </source>
</evidence>
<evidence type="ECO:0000269" key="3">
    <source>
    </source>
</evidence>
<evidence type="ECO:0000269" key="4">
    <source>
    </source>
</evidence>
<evidence type="ECO:0000269" key="5">
    <source>
    </source>
</evidence>
<evidence type="ECO:0000269" key="6">
    <source>
    </source>
</evidence>
<evidence type="ECO:0000269" key="7">
    <source>
    </source>
</evidence>
<evidence type="ECO:0000269" key="8">
    <source>
    </source>
</evidence>
<evidence type="ECO:0000305" key="9"/>
<evidence type="ECO:0007744" key="10">
    <source>
    </source>
</evidence>
<evidence type="ECO:0007744" key="11">
    <source>
    </source>
</evidence>
<evidence type="ECO:0007744" key="12">
    <source>
    </source>
</evidence>
<evidence type="ECO:0007744" key="13">
    <source>
    </source>
</evidence>
<evidence type="ECO:0007829" key="14">
    <source>
        <dbReference type="PDB" id="9E8J"/>
    </source>
</evidence>
<dbReference type="EC" id="3.4.19.-"/>
<dbReference type="EMBL" id="U86782">
    <property type="protein sequence ID" value="AAC51866.1"/>
    <property type="molecule type" value="mRNA"/>
</dbReference>
<dbReference type="EMBL" id="AK055128">
    <property type="protein sequence ID" value="BAG51474.1"/>
    <property type="molecule type" value="mRNA"/>
</dbReference>
<dbReference type="EMBL" id="CH471058">
    <property type="protein sequence ID" value="EAX11370.1"/>
    <property type="molecule type" value="Genomic_DNA"/>
</dbReference>
<dbReference type="EMBL" id="BC066336">
    <property type="protein sequence ID" value="AAH66336.1"/>
    <property type="molecule type" value="mRNA"/>
</dbReference>
<dbReference type="CCDS" id="CCDS46437.1"/>
<dbReference type="RefSeq" id="NP_005796.1">
    <property type="nucleotide sequence ID" value="NM_005805.6"/>
</dbReference>
<dbReference type="PDB" id="5GJQ">
    <property type="method" value="EM"/>
    <property type="resolution" value="4.50 A"/>
    <property type="chains" value="V=1-310"/>
</dbReference>
<dbReference type="PDB" id="5GJR">
    <property type="method" value="EM"/>
    <property type="resolution" value="3.50 A"/>
    <property type="chains" value="9/V=1-310"/>
</dbReference>
<dbReference type="PDB" id="5L4K">
    <property type="method" value="EM"/>
    <property type="resolution" value="4.50 A"/>
    <property type="chains" value="V=1-310"/>
</dbReference>
<dbReference type="PDB" id="5LN3">
    <property type="method" value="EM"/>
    <property type="resolution" value="6.80 A"/>
    <property type="chains" value="V=1-310"/>
</dbReference>
<dbReference type="PDB" id="5M32">
    <property type="method" value="EM"/>
    <property type="resolution" value="3.80 A"/>
    <property type="chains" value="q=1-310"/>
</dbReference>
<dbReference type="PDB" id="5T0C">
    <property type="method" value="EM"/>
    <property type="resolution" value="3.80 A"/>
    <property type="chains" value="Ac/Bc=1-310"/>
</dbReference>
<dbReference type="PDB" id="5T0G">
    <property type="method" value="EM"/>
    <property type="resolution" value="4.40 A"/>
    <property type="chains" value="c=2-310"/>
</dbReference>
<dbReference type="PDB" id="5T0H">
    <property type="method" value="EM"/>
    <property type="resolution" value="6.80 A"/>
    <property type="chains" value="c=2-310"/>
</dbReference>
<dbReference type="PDB" id="5T0I">
    <property type="method" value="EM"/>
    <property type="resolution" value="8.00 A"/>
    <property type="chains" value="c=2-310"/>
</dbReference>
<dbReference type="PDB" id="5T0J">
    <property type="method" value="EM"/>
    <property type="resolution" value="8.00 A"/>
    <property type="chains" value="c=2-310"/>
</dbReference>
<dbReference type="PDB" id="5VFP">
    <property type="method" value="EM"/>
    <property type="resolution" value="4.20 A"/>
    <property type="chains" value="c=24-310"/>
</dbReference>
<dbReference type="PDB" id="5VFQ">
    <property type="method" value="EM"/>
    <property type="resolution" value="4.20 A"/>
    <property type="chains" value="c=24-310"/>
</dbReference>
<dbReference type="PDB" id="5VFR">
    <property type="method" value="EM"/>
    <property type="resolution" value="4.90 A"/>
    <property type="chains" value="c=24-310"/>
</dbReference>
<dbReference type="PDB" id="5VFS">
    <property type="method" value="EM"/>
    <property type="resolution" value="3.60 A"/>
    <property type="chains" value="c=2-310"/>
</dbReference>
<dbReference type="PDB" id="5VFT">
    <property type="method" value="EM"/>
    <property type="resolution" value="7.00 A"/>
    <property type="chains" value="c=24-310"/>
</dbReference>
<dbReference type="PDB" id="5VFU">
    <property type="method" value="EM"/>
    <property type="resolution" value="5.80 A"/>
    <property type="chains" value="c=24-310"/>
</dbReference>
<dbReference type="PDB" id="5VGZ">
    <property type="method" value="EM"/>
    <property type="resolution" value="3.70 A"/>
    <property type="chains" value="c=24-310"/>
</dbReference>
<dbReference type="PDB" id="5VHF">
    <property type="method" value="EM"/>
    <property type="resolution" value="5.70 A"/>
    <property type="chains" value="c=24-310"/>
</dbReference>
<dbReference type="PDB" id="5VHH">
    <property type="method" value="EM"/>
    <property type="resolution" value="6.10 A"/>
    <property type="chains" value="c=24-310"/>
</dbReference>
<dbReference type="PDB" id="5VHI">
    <property type="method" value="EM"/>
    <property type="resolution" value="6.80 A"/>
    <property type="chains" value="c=24-310"/>
</dbReference>
<dbReference type="PDB" id="5VHS">
    <property type="method" value="EM"/>
    <property type="resolution" value="8.80 A"/>
    <property type="chains" value="c=24-310"/>
</dbReference>
<dbReference type="PDB" id="6MSB">
    <property type="method" value="EM"/>
    <property type="resolution" value="3.00 A"/>
    <property type="chains" value="c=2-310"/>
</dbReference>
<dbReference type="PDB" id="6MSD">
    <property type="method" value="EM"/>
    <property type="resolution" value="3.20 A"/>
    <property type="chains" value="c=2-310"/>
</dbReference>
<dbReference type="PDB" id="6MSE">
    <property type="method" value="EM"/>
    <property type="resolution" value="3.30 A"/>
    <property type="chains" value="c=2-310"/>
</dbReference>
<dbReference type="PDB" id="6MSG">
    <property type="method" value="EM"/>
    <property type="resolution" value="3.50 A"/>
    <property type="chains" value="c=2-310"/>
</dbReference>
<dbReference type="PDB" id="6MSH">
    <property type="method" value="EM"/>
    <property type="resolution" value="3.60 A"/>
    <property type="chains" value="c=2-310"/>
</dbReference>
<dbReference type="PDB" id="6MSJ">
    <property type="method" value="EM"/>
    <property type="resolution" value="3.30 A"/>
    <property type="chains" value="c=2-310"/>
</dbReference>
<dbReference type="PDB" id="6MSK">
    <property type="method" value="EM"/>
    <property type="resolution" value="3.20 A"/>
    <property type="chains" value="c=2-310"/>
</dbReference>
<dbReference type="PDB" id="6WJD">
    <property type="method" value="EM"/>
    <property type="resolution" value="4.80 A"/>
    <property type="chains" value="c=2-310"/>
</dbReference>
<dbReference type="PDB" id="6WJN">
    <property type="method" value="EM"/>
    <property type="resolution" value="5.70 A"/>
    <property type="chains" value="c=24-310"/>
</dbReference>
<dbReference type="PDB" id="7QXN">
    <property type="method" value="EM"/>
    <property type="resolution" value="3.70 A"/>
    <property type="chains" value="c=2-310"/>
</dbReference>
<dbReference type="PDB" id="7QXP">
    <property type="method" value="EM"/>
    <property type="resolution" value="3.60 A"/>
    <property type="chains" value="c=2-310"/>
</dbReference>
<dbReference type="PDB" id="7QXU">
    <property type="method" value="EM"/>
    <property type="resolution" value="4.30 A"/>
    <property type="chains" value="c=2-310"/>
</dbReference>
<dbReference type="PDB" id="7QXW">
    <property type="method" value="EM"/>
    <property type="resolution" value="4.10 A"/>
    <property type="chains" value="c=2-310"/>
</dbReference>
<dbReference type="PDB" id="7QXX">
    <property type="method" value="EM"/>
    <property type="resolution" value="4.40 A"/>
    <property type="chains" value="c=2-310"/>
</dbReference>
<dbReference type="PDB" id="7QY7">
    <property type="method" value="EM"/>
    <property type="resolution" value="4.70 A"/>
    <property type="chains" value="c=2-310"/>
</dbReference>
<dbReference type="PDB" id="7QYA">
    <property type="method" value="EM"/>
    <property type="resolution" value="4.80 A"/>
    <property type="chains" value="c=2-310"/>
</dbReference>
<dbReference type="PDB" id="7QYB">
    <property type="method" value="EM"/>
    <property type="resolution" value="4.10 A"/>
    <property type="chains" value="c=2-310"/>
</dbReference>
<dbReference type="PDB" id="7W37">
    <property type="method" value="EM"/>
    <property type="resolution" value="3.00 A"/>
    <property type="chains" value="c=1-310"/>
</dbReference>
<dbReference type="PDB" id="7W38">
    <property type="method" value="EM"/>
    <property type="resolution" value="3.10 A"/>
    <property type="chains" value="c=1-310"/>
</dbReference>
<dbReference type="PDB" id="7W39">
    <property type="method" value="EM"/>
    <property type="resolution" value="3.20 A"/>
    <property type="chains" value="c=1-310"/>
</dbReference>
<dbReference type="PDB" id="7W3A">
    <property type="method" value="EM"/>
    <property type="resolution" value="3.50 A"/>
    <property type="chains" value="c=1-310"/>
</dbReference>
<dbReference type="PDB" id="7W3B">
    <property type="method" value="EM"/>
    <property type="resolution" value="3.60 A"/>
    <property type="chains" value="c=1-310"/>
</dbReference>
<dbReference type="PDB" id="7W3C">
    <property type="method" value="EM"/>
    <property type="resolution" value="3.40 A"/>
    <property type="chains" value="c=1-310"/>
</dbReference>
<dbReference type="PDB" id="7W3F">
    <property type="method" value="EM"/>
    <property type="resolution" value="3.30 A"/>
    <property type="chains" value="c=1-310"/>
</dbReference>
<dbReference type="PDB" id="7W3G">
    <property type="method" value="EM"/>
    <property type="resolution" value="3.20 A"/>
    <property type="chains" value="c=1-310"/>
</dbReference>
<dbReference type="PDB" id="7W3H">
    <property type="method" value="EM"/>
    <property type="resolution" value="3.20 A"/>
    <property type="chains" value="c=1-310"/>
</dbReference>
<dbReference type="PDB" id="7W3I">
    <property type="method" value="EM"/>
    <property type="resolution" value="3.50 A"/>
    <property type="chains" value="c=1-310"/>
</dbReference>
<dbReference type="PDB" id="7W3J">
    <property type="method" value="EM"/>
    <property type="resolution" value="3.50 A"/>
    <property type="chains" value="c=1-310"/>
</dbReference>
<dbReference type="PDB" id="7W3K">
    <property type="method" value="EM"/>
    <property type="resolution" value="3.60 A"/>
    <property type="chains" value="c=1-310"/>
</dbReference>
<dbReference type="PDB" id="7W3M">
    <property type="method" value="EM"/>
    <property type="resolution" value="3.50 A"/>
    <property type="chains" value="c=1-310"/>
</dbReference>
<dbReference type="PDB" id="8CVT">
    <property type="method" value="EM"/>
    <property type="resolution" value="3.00 A"/>
    <property type="chains" value="c=1-310"/>
</dbReference>
<dbReference type="PDB" id="8JRI">
    <property type="method" value="EM"/>
    <property type="resolution" value="3.40 A"/>
    <property type="chains" value="c=1-310"/>
</dbReference>
<dbReference type="PDB" id="8JRT">
    <property type="method" value="EM"/>
    <property type="resolution" value="3.60 A"/>
    <property type="chains" value="c=1-310"/>
</dbReference>
<dbReference type="PDB" id="8JTI">
    <property type="method" value="EM"/>
    <property type="resolution" value="3.80 A"/>
    <property type="chains" value="c=1-310"/>
</dbReference>
<dbReference type="PDB" id="8K0G">
    <property type="method" value="EM"/>
    <property type="resolution" value="3.80 A"/>
    <property type="chains" value="c=1-310"/>
</dbReference>
<dbReference type="PDB" id="8USB">
    <property type="method" value="EM"/>
    <property type="resolution" value="2.73 A"/>
    <property type="chains" value="c=1-310"/>
</dbReference>
<dbReference type="PDB" id="8USC">
    <property type="method" value="EM"/>
    <property type="resolution" value="3.10 A"/>
    <property type="chains" value="c=1-310"/>
</dbReference>
<dbReference type="PDB" id="9E8G">
    <property type="method" value="EM"/>
    <property type="resolution" value="3.01 A"/>
    <property type="chains" value="c=1-310"/>
</dbReference>
<dbReference type="PDB" id="9E8H">
    <property type="method" value="EM"/>
    <property type="resolution" value="2.90 A"/>
    <property type="chains" value="c=1-310"/>
</dbReference>
<dbReference type="PDB" id="9E8I">
    <property type="method" value="EM"/>
    <property type="resolution" value="2.87 A"/>
    <property type="chains" value="c=1-310"/>
</dbReference>
<dbReference type="PDB" id="9E8J">
    <property type="method" value="EM"/>
    <property type="resolution" value="3.47 A"/>
    <property type="chains" value="c=1-310"/>
</dbReference>
<dbReference type="PDB" id="9E8K">
    <property type="method" value="EM"/>
    <property type="resolution" value="4.08 A"/>
    <property type="chains" value="c=1-310"/>
</dbReference>
<dbReference type="PDB" id="9E8L">
    <property type="method" value="EM"/>
    <property type="resolution" value="3.59 A"/>
    <property type="chains" value="c=1-310"/>
</dbReference>
<dbReference type="PDB" id="9E8N">
    <property type="method" value="EM"/>
    <property type="resolution" value="3.62 A"/>
    <property type="chains" value="c=1-310"/>
</dbReference>
<dbReference type="PDB" id="9E8O">
    <property type="method" value="EM"/>
    <property type="resolution" value="3.10 A"/>
    <property type="chains" value="c=1-310"/>
</dbReference>
<dbReference type="PDB" id="9E8Q">
    <property type="method" value="EM"/>
    <property type="resolution" value="3.16 A"/>
    <property type="chains" value="c=1-310"/>
</dbReference>
<dbReference type="PDBsum" id="5GJQ"/>
<dbReference type="PDBsum" id="5GJR"/>
<dbReference type="PDBsum" id="5L4K"/>
<dbReference type="PDBsum" id="5LN3"/>
<dbReference type="PDBsum" id="5M32"/>
<dbReference type="PDBsum" id="5T0C"/>
<dbReference type="PDBsum" id="5T0G"/>
<dbReference type="PDBsum" id="5T0H"/>
<dbReference type="PDBsum" id="5T0I"/>
<dbReference type="PDBsum" id="5T0J"/>
<dbReference type="PDBsum" id="5VFP"/>
<dbReference type="PDBsum" id="5VFQ"/>
<dbReference type="PDBsum" id="5VFR"/>
<dbReference type="PDBsum" id="5VFS"/>
<dbReference type="PDBsum" id="5VFT"/>
<dbReference type="PDBsum" id="5VFU"/>
<dbReference type="PDBsum" id="5VGZ"/>
<dbReference type="PDBsum" id="5VHF"/>
<dbReference type="PDBsum" id="5VHH"/>
<dbReference type="PDBsum" id="5VHI"/>
<dbReference type="PDBsum" id="5VHS"/>
<dbReference type="PDBsum" id="6MSB"/>
<dbReference type="PDBsum" id="6MSD"/>
<dbReference type="PDBsum" id="6MSE"/>
<dbReference type="PDBsum" id="6MSG"/>
<dbReference type="PDBsum" id="6MSH"/>
<dbReference type="PDBsum" id="6MSJ"/>
<dbReference type="PDBsum" id="6MSK"/>
<dbReference type="PDBsum" id="6WJD"/>
<dbReference type="PDBsum" id="6WJN"/>
<dbReference type="PDBsum" id="7QXN"/>
<dbReference type="PDBsum" id="7QXP"/>
<dbReference type="PDBsum" id="7QXU"/>
<dbReference type="PDBsum" id="7QXW"/>
<dbReference type="PDBsum" id="7QXX"/>
<dbReference type="PDBsum" id="7QY7"/>
<dbReference type="PDBsum" id="7QYA"/>
<dbReference type="PDBsum" id="7QYB"/>
<dbReference type="PDBsum" id="7W37"/>
<dbReference type="PDBsum" id="7W38"/>
<dbReference type="PDBsum" id="7W39"/>
<dbReference type="PDBsum" id="7W3A"/>
<dbReference type="PDBsum" id="7W3B"/>
<dbReference type="PDBsum" id="7W3C"/>
<dbReference type="PDBsum" id="7W3F"/>
<dbReference type="PDBsum" id="7W3G"/>
<dbReference type="PDBsum" id="7W3H"/>
<dbReference type="PDBsum" id="7W3I"/>
<dbReference type="PDBsum" id="7W3J"/>
<dbReference type="PDBsum" id="7W3K"/>
<dbReference type="PDBsum" id="7W3M"/>
<dbReference type="PDBsum" id="8CVT"/>
<dbReference type="PDBsum" id="8JRI"/>
<dbReference type="PDBsum" id="8JRT"/>
<dbReference type="PDBsum" id="8JTI"/>
<dbReference type="PDBsum" id="8K0G"/>
<dbReference type="PDBsum" id="8USB"/>
<dbReference type="PDBsum" id="8USC"/>
<dbReference type="PDBsum" id="9E8G"/>
<dbReference type="PDBsum" id="9E8H"/>
<dbReference type="PDBsum" id="9E8I"/>
<dbReference type="PDBsum" id="9E8J"/>
<dbReference type="PDBsum" id="9E8K"/>
<dbReference type="PDBsum" id="9E8L"/>
<dbReference type="PDBsum" id="9E8N"/>
<dbReference type="PDBsum" id="9E8O"/>
<dbReference type="PDBsum" id="9E8Q"/>
<dbReference type="EMDB" id="EMD-14201"/>
<dbReference type="EMDB" id="EMD-14202"/>
<dbReference type="EMDB" id="EMD-14203"/>
<dbReference type="EMDB" id="EMD-14204"/>
<dbReference type="EMDB" id="EMD-14205"/>
<dbReference type="EMDB" id="EMD-14209"/>
<dbReference type="EMDB" id="EMD-14210"/>
<dbReference type="EMDB" id="EMD-14211"/>
<dbReference type="EMDB" id="EMD-21691"/>
<dbReference type="EMDB" id="EMD-21696"/>
<dbReference type="EMDB" id="EMD-27018"/>
<dbReference type="EMDB" id="EMD-32272"/>
<dbReference type="EMDB" id="EMD-32273"/>
<dbReference type="EMDB" id="EMD-32274"/>
<dbReference type="EMDB" id="EMD-32275"/>
<dbReference type="EMDB" id="EMD-32276"/>
<dbReference type="EMDB" id="EMD-32277"/>
<dbReference type="EMDB" id="EMD-32278"/>
<dbReference type="EMDB" id="EMD-32279"/>
<dbReference type="EMDB" id="EMD-32280"/>
<dbReference type="EMDB" id="EMD-32281"/>
<dbReference type="EMDB" id="EMD-32282"/>
<dbReference type="EMDB" id="EMD-32283"/>
<dbReference type="EMDB" id="EMD-32284"/>
<dbReference type="EMDB" id="EMD-36598"/>
<dbReference type="EMDB" id="EMD-36605"/>
<dbReference type="EMDB" id="EMD-36645"/>
<dbReference type="EMDB" id="EMD-36764"/>
<dbReference type="EMDB" id="EMD-4089"/>
<dbReference type="EMDB" id="EMD-4146"/>
<dbReference type="EMDB" id="EMD-42506"/>
<dbReference type="EMDB" id="EMD-42507"/>
<dbReference type="EMDB" id="EMD-47719"/>
<dbReference type="EMDB" id="EMD-47720"/>
<dbReference type="EMDB" id="EMD-47721"/>
<dbReference type="EMDB" id="EMD-47722"/>
<dbReference type="EMDB" id="EMD-47723"/>
<dbReference type="EMDB" id="EMD-47724"/>
<dbReference type="EMDB" id="EMD-47725"/>
<dbReference type="EMDB" id="EMD-47726"/>
<dbReference type="EMDB" id="EMD-47727"/>
<dbReference type="EMDB" id="EMD-8663"/>
<dbReference type="EMDB" id="EMD-8664"/>
<dbReference type="EMDB" id="EMD-8665"/>
<dbReference type="EMDB" id="EMD-8666"/>
<dbReference type="EMDB" id="EMD-8667"/>
<dbReference type="EMDB" id="EMD-8668"/>
<dbReference type="EMDB" id="EMD-8672"/>
<dbReference type="EMDB" id="EMD-8674"/>
<dbReference type="EMDB" id="EMD-8675"/>
<dbReference type="EMDB" id="EMD-8676"/>
<dbReference type="EMDB" id="EMD-8684"/>
<dbReference type="EMDB" id="EMD-9216"/>
<dbReference type="EMDB" id="EMD-9217"/>
<dbReference type="EMDB" id="EMD-9218"/>
<dbReference type="EMDB" id="EMD-9219"/>
<dbReference type="EMDB" id="EMD-9220"/>
<dbReference type="EMDB" id="EMD-9221"/>
<dbReference type="EMDB" id="EMD-9222"/>
<dbReference type="EMDB" id="EMD-9511"/>
<dbReference type="EMDB" id="EMD-9512"/>
<dbReference type="SMR" id="O00487"/>
<dbReference type="BioGRID" id="115508">
    <property type="interactions" value="533"/>
</dbReference>
<dbReference type="ComplexPortal" id="CPX-5993">
    <property type="entry name" value="26S proteasome complex"/>
</dbReference>
<dbReference type="ComplexPortal" id="CPX-8964">
    <property type="entry name" value="19S proteasome regulatory complex"/>
</dbReference>
<dbReference type="ComplexPortal" id="CPX-9082">
    <property type="entry name" value="19S-20S-PA28-alphabeta hybrid proteasome complex"/>
</dbReference>
<dbReference type="ComplexPortal" id="CPX-9085">
    <property type="entry name" value="19S-20S-PA28-gamma hybrid proteasome complex"/>
</dbReference>
<dbReference type="ComplexPortal" id="CPX-9086">
    <property type="entry name" value="30S proteasome complex"/>
</dbReference>
<dbReference type="CORUM" id="O00487"/>
<dbReference type="FunCoup" id="O00487">
    <property type="interactions" value="2523"/>
</dbReference>
<dbReference type="IntAct" id="O00487">
    <property type="interactions" value="119"/>
</dbReference>
<dbReference type="MINT" id="O00487"/>
<dbReference type="STRING" id="9606.ENSP00000386541"/>
<dbReference type="BindingDB" id="O00487"/>
<dbReference type="ChEMBL" id="CHEMBL2007629"/>
<dbReference type="MEROPS" id="M67.A10"/>
<dbReference type="GlyCosmos" id="O00487">
    <property type="glycosylation" value="1 site, 2 glycans"/>
</dbReference>
<dbReference type="GlyGen" id="O00487">
    <property type="glycosylation" value="1 site, 2 O-linked glycans (1 site)"/>
</dbReference>
<dbReference type="iPTMnet" id="O00487"/>
<dbReference type="MetOSite" id="O00487"/>
<dbReference type="PhosphoSitePlus" id="O00487"/>
<dbReference type="SwissPalm" id="O00487"/>
<dbReference type="BioMuta" id="PSMD14"/>
<dbReference type="OGP" id="O00487"/>
<dbReference type="REPRODUCTION-2DPAGE" id="IPI00024821"/>
<dbReference type="jPOST" id="O00487"/>
<dbReference type="MassIVE" id="O00487"/>
<dbReference type="PaxDb" id="9606-ENSP00000386541"/>
<dbReference type="PeptideAtlas" id="O00487"/>
<dbReference type="ProteomicsDB" id="47932"/>
<dbReference type="Pumba" id="O00487"/>
<dbReference type="TopDownProteomics" id="O00487"/>
<dbReference type="Antibodypedia" id="1047">
    <property type="antibodies" value="273 antibodies from 35 providers"/>
</dbReference>
<dbReference type="DNASU" id="10213"/>
<dbReference type="Ensembl" id="ENST00000409682.8">
    <property type="protein sequence ID" value="ENSP00000386541.3"/>
    <property type="gene ID" value="ENSG00000115233.12"/>
</dbReference>
<dbReference type="GeneID" id="10213"/>
<dbReference type="KEGG" id="hsa:10213"/>
<dbReference type="MANE-Select" id="ENST00000409682.8">
    <property type="protein sequence ID" value="ENSP00000386541.3"/>
    <property type="RefSeq nucleotide sequence ID" value="NM_005805.6"/>
    <property type="RefSeq protein sequence ID" value="NP_005796.1"/>
</dbReference>
<dbReference type="UCSC" id="uc002ubu.4">
    <property type="organism name" value="human"/>
</dbReference>
<dbReference type="AGR" id="HGNC:16889"/>
<dbReference type="CTD" id="10213"/>
<dbReference type="DisGeNET" id="10213"/>
<dbReference type="GeneCards" id="PSMD14"/>
<dbReference type="HGNC" id="HGNC:16889">
    <property type="gene designation" value="PSMD14"/>
</dbReference>
<dbReference type="HPA" id="ENSG00000115233">
    <property type="expression patterns" value="Low tissue specificity"/>
</dbReference>
<dbReference type="MIM" id="607173">
    <property type="type" value="gene"/>
</dbReference>
<dbReference type="neXtProt" id="NX_O00487"/>
<dbReference type="OpenTargets" id="ENSG00000115233"/>
<dbReference type="PharmGKB" id="PA134957776"/>
<dbReference type="VEuPathDB" id="HostDB:ENSG00000115233"/>
<dbReference type="eggNOG" id="KOG1555">
    <property type="taxonomic scope" value="Eukaryota"/>
</dbReference>
<dbReference type="GeneTree" id="ENSGT00730000111116"/>
<dbReference type="HOGENOM" id="CLU_052991_0_1_1"/>
<dbReference type="InParanoid" id="O00487"/>
<dbReference type="OMA" id="KTGRHEM"/>
<dbReference type="OrthoDB" id="605656at2759"/>
<dbReference type="PAN-GO" id="O00487">
    <property type="GO annotations" value="5 GO annotations based on evolutionary models"/>
</dbReference>
<dbReference type="PhylomeDB" id="O00487"/>
<dbReference type="TreeFam" id="TF105748"/>
<dbReference type="PathwayCommons" id="O00487"/>
<dbReference type="Reactome" id="R-HSA-1169091">
    <property type="pathway name" value="Activation of NF-kappaB in B cells"/>
</dbReference>
<dbReference type="Reactome" id="R-HSA-1234176">
    <property type="pathway name" value="Oxygen-dependent proline hydroxylation of Hypoxia-inducible Factor Alpha"/>
</dbReference>
<dbReference type="Reactome" id="R-HSA-1236974">
    <property type="pathway name" value="ER-Phagosome pathway"/>
</dbReference>
<dbReference type="Reactome" id="R-HSA-1236978">
    <property type="pathway name" value="Cross-presentation of soluble exogenous antigens (endosomes)"/>
</dbReference>
<dbReference type="Reactome" id="R-HSA-174084">
    <property type="pathway name" value="Autodegradation of Cdh1 by Cdh1:APC/C"/>
</dbReference>
<dbReference type="Reactome" id="R-HSA-174113">
    <property type="pathway name" value="SCF-beta-TrCP mediated degradation of Emi1"/>
</dbReference>
<dbReference type="Reactome" id="R-HSA-174154">
    <property type="pathway name" value="APC/C:Cdc20 mediated degradation of Securin"/>
</dbReference>
<dbReference type="Reactome" id="R-HSA-174178">
    <property type="pathway name" value="APC/C:Cdh1 mediated degradation of Cdc20 and other APC/C:Cdh1 targeted proteins in late mitosis/early G1"/>
</dbReference>
<dbReference type="Reactome" id="R-HSA-174184">
    <property type="pathway name" value="Cdc20:Phospho-APC/C mediated degradation of Cyclin A"/>
</dbReference>
<dbReference type="Reactome" id="R-HSA-180534">
    <property type="pathway name" value="Vpu mediated degradation of CD4"/>
</dbReference>
<dbReference type="Reactome" id="R-HSA-180585">
    <property type="pathway name" value="Vif-mediated degradation of APOBEC3G"/>
</dbReference>
<dbReference type="Reactome" id="R-HSA-187577">
    <property type="pathway name" value="SCF(Skp2)-mediated degradation of p27/p21"/>
</dbReference>
<dbReference type="Reactome" id="R-HSA-195253">
    <property type="pathway name" value="Degradation of beta-catenin by the destruction complex"/>
</dbReference>
<dbReference type="Reactome" id="R-HSA-202424">
    <property type="pathway name" value="Downstream TCR signaling"/>
</dbReference>
<dbReference type="Reactome" id="R-HSA-211733">
    <property type="pathway name" value="Regulation of activated PAK-2p34 by proteasome mediated degradation"/>
</dbReference>
<dbReference type="Reactome" id="R-HSA-2467813">
    <property type="pathway name" value="Separation of Sister Chromatids"/>
</dbReference>
<dbReference type="Reactome" id="R-HSA-2871837">
    <property type="pathway name" value="FCERI mediated NF-kB activation"/>
</dbReference>
<dbReference type="Reactome" id="R-HSA-349425">
    <property type="pathway name" value="Autodegradation of the E3 ubiquitin ligase COP1"/>
</dbReference>
<dbReference type="Reactome" id="R-HSA-350562">
    <property type="pathway name" value="Regulation of ornithine decarboxylase (ODC)"/>
</dbReference>
<dbReference type="Reactome" id="R-HSA-382556">
    <property type="pathway name" value="ABC-family proteins mediated transport"/>
</dbReference>
<dbReference type="Reactome" id="R-HSA-450408">
    <property type="pathway name" value="AUF1 (hnRNP D0) binds and destabilizes mRNA"/>
</dbReference>
<dbReference type="Reactome" id="R-HSA-4608870">
    <property type="pathway name" value="Asymmetric localization of PCP proteins"/>
</dbReference>
<dbReference type="Reactome" id="R-HSA-4641257">
    <property type="pathway name" value="Degradation of AXIN"/>
</dbReference>
<dbReference type="Reactome" id="R-HSA-4641258">
    <property type="pathway name" value="Degradation of DVL"/>
</dbReference>
<dbReference type="Reactome" id="R-HSA-5358346">
    <property type="pathway name" value="Hedgehog ligand biogenesis"/>
</dbReference>
<dbReference type="Reactome" id="R-HSA-5362768">
    <property type="pathway name" value="Hh mutants are degraded by ERAD"/>
</dbReference>
<dbReference type="Reactome" id="R-HSA-5607761">
    <property type="pathway name" value="Dectin-1 mediated noncanonical NF-kB signaling"/>
</dbReference>
<dbReference type="Reactome" id="R-HSA-5607764">
    <property type="pathway name" value="CLEC7A (Dectin-1) signaling"/>
</dbReference>
<dbReference type="Reactome" id="R-HSA-5610780">
    <property type="pathway name" value="Degradation of GLI1 by the proteasome"/>
</dbReference>
<dbReference type="Reactome" id="R-HSA-5610783">
    <property type="pathway name" value="Degradation of GLI2 by the proteasome"/>
</dbReference>
<dbReference type="Reactome" id="R-HSA-5610785">
    <property type="pathway name" value="GLI3 is processed to GLI3R by the proteasome"/>
</dbReference>
<dbReference type="Reactome" id="R-HSA-5632684">
    <property type="pathway name" value="Hedgehog 'on' state"/>
</dbReference>
<dbReference type="Reactome" id="R-HSA-5658442">
    <property type="pathway name" value="Regulation of RAS by GAPs"/>
</dbReference>
<dbReference type="Reactome" id="R-HSA-5668541">
    <property type="pathway name" value="TNFR2 non-canonical NF-kB pathway"/>
</dbReference>
<dbReference type="Reactome" id="R-HSA-5676590">
    <property type="pathway name" value="NIK--&gt;noncanonical NF-kB signaling"/>
</dbReference>
<dbReference type="Reactome" id="R-HSA-5678895">
    <property type="pathway name" value="Defective CFTR causes cystic fibrosis"/>
</dbReference>
<dbReference type="Reactome" id="R-HSA-5687128">
    <property type="pathway name" value="MAPK6/MAPK4 signaling"/>
</dbReference>
<dbReference type="Reactome" id="R-HSA-5689603">
    <property type="pathway name" value="UCH proteinases"/>
</dbReference>
<dbReference type="Reactome" id="R-HSA-5689880">
    <property type="pathway name" value="Ub-specific processing proteases"/>
</dbReference>
<dbReference type="Reactome" id="R-HSA-5689901">
    <property type="pathway name" value="Metalloprotease DUBs"/>
</dbReference>
<dbReference type="Reactome" id="R-HSA-6798695">
    <property type="pathway name" value="Neutrophil degranulation"/>
</dbReference>
<dbReference type="Reactome" id="R-HSA-68867">
    <property type="pathway name" value="Assembly of the pre-replicative complex"/>
</dbReference>
<dbReference type="Reactome" id="R-HSA-68949">
    <property type="pathway name" value="Orc1 removal from chromatin"/>
</dbReference>
<dbReference type="Reactome" id="R-HSA-69017">
    <property type="pathway name" value="CDK-mediated phosphorylation and removal of Cdc6"/>
</dbReference>
<dbReference type="Reactome" id="R-HSA-69481">
    <property type="pathway name" value="G2/M Checkpoints"/>
</dbReference>
<dbReference type="Reactome" id="R-HSA-69601">
    <property type="pathway name" value="Ubiquitin Mediated Degradation of Phosphorylated Cdc25A"/>
</dbReference>
<dbReference type="Reactome" id="R-HSA-75815">
    <property type="pathway name" value="Ubiquitin-dependent degradation of Cyclin D"/>
</dbReference>
<dbReference type="Reactome" id="R-HSA-8852276">
    <property type="pathway name" value="The role of GTSE1 in G2/M progression after G2 checkpoint"/>
</dbReference>
<dbReference type="Reactome" id="R-HSA-8854050">
    <property type="pathway name" value="FBXL7 down-regulates AURKA during mitotic entry and in early mitosis"/>
</dbReference>
<dbReference type="Reactome" id="R-HSA-8939236">
    <property type="pathway name" value="RUNX1 regulates transcription of genes involved in differentiation of HSCs"/>
</dbReference>
<dbReference type="Reactome" id="R-HSA-8939902">
    <property type="pathway name" value="Regulation of RUNX2 expression and activity"/>
</dbReference>
<dbReference type="Reactome" id="R-HSA-8941858">
    <property type="pathway name" value="Regulation of RUNX3 expression and activity"/>
</dbReference>
<dbReference type="Reactome" id="R-HSA-8948751">
    <property type="pathway name" value="Regulation of PTEN stability and activity"/>
</dbReference>
<dbReference type="Reactome" id="R-HSA-8951664">
    <property type="pathway name" value="Neddylation"/>
</dbReference>
<dbReference type="Reactome" id="R-HSA-9010553">
    <property type="pathway name" value="Regulation of expression of SLITs and ROBOs"/>
</dbReference>
<dbReference type="Reactome" id="R-HSA-9020702">
    <property type="pathway name" value="Interleukin-1 signaling"/>
</dbReference>
<dbReference type="Reactome" id="R-HSA-9604323">
    <property type="pathway name" value="Negative regulation of NOTCH4 signaling"/>
</dbReference>
<dbReference type="Reactome" id="R-HSA-9755511">
    <property type="pathway name" value="KEAP1-NFE2L2 pathway"/>
</dbReference>
<dbReference type="Reactome" id="R-HSA-9762114">
    <property type="pathway name" value="GSK3B and BTRC:CUL1-mediated-degradation of NFE2L2"/>
</dbReference>
<dbReference type="Reactome" id="R-HSA-9824272">
    <property type="pathway name" value="Somitogenesis"/>
</dbReference>
<dbReference type="Reactome" id="R-HSA-983168">
    <property type="pathway name" value="Antigen processing: Ubiquitination &amp; Proteasome degradation"/>
</dbReference>
<dbReference type="Reactome" id="R-HSA-9907900">
    <property type="pathway name" value="Proteasome assembly"/>
</dbReference>
<dbReference type="SignaLink" id="O00487"/>
<dbReference type="SIGNOR" id="O00487"/>
<dbReference type="BioGRID-ORCS" id="10213">
    <property type="hits" value="825 hits in 1165 CRISPR screens"/>
</dbReference>
<dbReference type="CD-CODE" id="FB4E32DD">
    <property type="entry name" value="Presynaptic clusters and postsynaptic densities"/>
</dbReference>
<dbReference type="ChiTaRS" id="PSMD14">
    <property type="organism name" value="human"/>
</dbReference>
<dbReference type="GeneWiki" id="PSMD14"/>
<dbReference type="GenomeRNAi" id="10213"/>
<dbReference type="Pharos" id="O00487">
    <property type="development level" value="Tchem"/>
</dbReference>
<dbReference type="PRO" id="PR:O00487"/>
<dbReference type="Proteomes" id="UP000005640">
    <property type="component" value="Chromosome 2"/>
</dbReference>
<dbReference type="RNAct" id="O00487">
    <property type="molecule type" value="protein"/>
</dbReference>
<dbReference type="Bgee" id="ENSG00000115233">
    <property type="expression patterns" value="Expressed in middle temporal gyrus and 213 other cell types or tissues"/>
</dbReference>
<dbReference type="ExpressionAtlas" id="O00487">
    <property type="expression patterns" value="baseline and differential"/>
</dbReference>
<dbReference type="GO" id="GO:0005829">
    <property type="term" value="C:cytosol"/>
    <property type="evidence" value="ECO:0000304"/>
    <property type="project" value="Reactome"/>
</dbReference>
<dbReference type="GO" id="GO:0031597">
    <property type="term" value="C:cytosolic proteasome complex"/>
    <property type="evidence" value="ECO:0007669"/>
    <property type="project" value="Ensembl"/>
</dbReference>
<dbReference type="GO" id="GO:0005576">
    <property type="term" value="C:extracellular region"/>
    <property type="evidence" value="ECO:0000304"/>
    <property type="project" value="Reactome"/>
</dbReference>
<dbReference type="GO" id="GO:1904813">
    <property type="term" value="C:ficolin-1-rich granule lumen"/>
    <property type="evidence" value="ECO:0000304"/>
    <property type="project" value="Reactome"/>
</dbReference>
<dbReference type="GO" id="GO:0005654">
    <property type="term" value="C:nucleoplasm"/>
    <property type="evidence" value="ECO:0000304"/>
    <property type="project" value="Reactome"/>
</dbReference>
<dbReference type="GO" id="GO:0005634">
    <property type="term" value="C:nucleus"/>
    <property type="evidence" value="ECO:0007005"/>
    <property type="project" value="UniProtKB"/>
</dbReference>
<dbReference type="GO" id="GO:0022624">
    <property type="term" value="C:proteasome accessory complex"/>
    <property type="evidence" value="ECO:0000250"/>
    <property type="project" value="UniProtKB"/>
</dbReference>
<dbReference type="GO" id="GO:0000502">
    <property type="term" value="C:proteasome complex"/>
    <property type="evidence" value="ECO:0000314"/>
    <property type="project" value="UniProtKB"/>
</dbReference>
<dbReference type="GO" id="GO:0008541">
    <property type="term" value="C:proteasome regulatory particle, lid subcomplex"/>
    <property type="evidence" value="ECO:0000315"/>
    <property type="project" value="UniProtKB"/>
</dbReference>
<dbReference type="GO" id="GO:0034774">
    <property type="term" value="C:secretory granule lumen"/>
    <property type="evidence" value="ECO:0000304"/>
    <property type="project" value="Reactome"/>
</dbReference>
<dbReference type="GO" id="GO:0061133">
    <property type="term" value="F:endopeptidase activator activity"/>
    <property type="evidence" value="ECO:0000315"/>
    <property type="project" value="UniProtKB"/>
</dbReference>
<dbReference type="GO" id="GO:0061578">
    <property type="term" value="F:K63-linked deubiquitinase activity"/>
    <property type="evidence" value="ECO:0000304"/>
    <property type="project" value="Reactome"/>
</dbReference>
<dbReference type="GO" id="GO:0046872">
    <property type="term" value="F:metal ion binding"/>
    <property type="evidence" value="ECO:0007669"/>
    <property type="project" value="UniProtKB-KW"/>
</dbReference>
<dbReference type="GO" id="GO:0140492">
    <property type="term" value="F:metal-dependent deubiquitinase activity"/>
    <property type="evidence" value="ECO:0000315"/>
    <property type="project" value="UniProtKB"/>
</dbReference>
<dbReference type="GO" id="GO:0008237">
    <property type="term" value="F:metallopeptidase activity"/>
    <property type="evidence" value="ECO:0000304"/>
    <property type="project" value="UniProtKB"/>
</dbReference>
<dbReference type="GO" id="GO:0070628">
    <property type="term" value="F:proteasome binding"/>
    <property type="evidence" value="ECO:0000314"/>
    <property type="project" value="UniProtKB"/>
</dbReference>
<dbReference type="GO" id="GO:0000724">
    <property type="term" value="P:double-strand break repair via homologous recombination"/>
    <property type="evidence" value="ECO:0000315"/>
    <property type="project" value="UniProtKB"/>
</dbReference>
<dbReference type="GO" id="GO:0006303">
    <property type="term" value="P:double-strand break repair via nonhomologous end joining"/>
    <property type="evidence" value="ECO:0000315"/>
    <property type="project" value="UniProtKB"/>
</dbReference>
<dbReference type="GO" id="GO:0043161">
    <property type="term" value="P:proteasome-mediated ubiquitin-dependent protein catabolic process"/>
    <property type="evidence" value="ECO:0000318"/>
    <property type="project" value="GO_Central"/>
</dbReference>
<dbReference type="GO" id="GO:0016579">
    <property type="term" value="P:protein deubiquitination"/>
    <property type="evidence" value="ECO:0000304"/>
    <property type="project" value="Reactome"/>
</dbReference>
<dbReference type="GO" id="GO:0070536">
    <property type="term" value="P:protein K63-linked deubiquitination"/>
    <property type="evidence" value="ECO:0000315"/>
    <property type="project" value="UniProtKB"/>
</dbReference>
<dbReference type="GO" id="GO:0061136">
    <property type="term" value="P:regulation of proteasomal protein catabolic process"/>
    <property type="evidence" value="ECO:0000315"/>
    <property type="project" value="UniProtKB"/>
</dbReference>
<dbReference type="GO" id="GO:0045471">
    <property type="term" value="P:response to ethanol"/>
    <property type="evidence" value="ECO:0007669"/>
    <property type="project" value="Ensembl"/>
</dbReference>
<dbReference type="GO" id="GO:0006511">
    <property type="term" value="P:ubiquitin-dependent protein catabolic process"/>
    <property type="evidence" value="ECO:0000304"/>
    <property type="project" value="UniProtKB"/>
</dbReference>
<dbReference type="CDD" id="cd08069">
    <property type="entry name" value="MPN_RPN11_CSN5"/>
    <property type="match status" value="1"/>
</dbReference>
<dbReference type="FunFam" id="3.40.140.10:FF:000001">
    <property type="entry name" value="26S proteasome non-ATPase regulatory subunit"/>
    <property type="match status" value="1"/>
</dbReference>
<dbReference type="Gene3D" id="3.40.140.10">
    <property type="entry name" value="Cytidine Deaminase, domain 2"/>
    <property type="match status" value="1"/>
</dbReference>
<dbReference type="InterPro" id="IPR000555">
    <property type="entry name" value="JAMM/MPN+_dom"/>
</dbReference>
<dbReference type="InterPro" id="IPR050242">
    <property type="entry name" value="JAMM_MPN+_peptidase_M67A"/>
</dbReference>
<dbReference type="InterPro" id="IPR037518">
    <property type="entry name" value="MPN"/>
</dbReference>
<dbReference type="InterPro" id="IPR056263">
    <property type="entry name" value="RPN11_C"/>
</dbReference>
<dbReference type="PANTHER" id="PTHR10410">
    <property type="entry name" value="EUKARYOTIC TRANSLATION INITIATION FACTOR 3 -RELATED"/>
    <property type="match status" value="1"/>
</dbReference>
<dbReference type="Pfam" id="PF01398">
    <property type="entry name" value="JAB"/>
    <property type="match status" value="1"/>
</dbReference>
<dbReference type="Pfam" id="PF23594">
    <property type="entry name" value="RPN11_C"/>
    <property type="match status" value="1"/>
</dbReference>
<dbReference type="SMART" id="SM00232">
    <property type="entry name" value="JAB_MPN"/>
    <property type="match status" value="1"/>
</dbReference>
<dbReference type="SUPFAM" id="SSF102712">
    <property type="entry name" value="JAB1/MPN domain"/>
    <property type="match status" value="1"/>
</dbReference>
<dbReference type="PROSITE" id="PS50249">
    <property type="entry name" value="MPN"/>
    <property type="match status" value="1"/>
</dbReference>
<gene>
    <name type="primary">PSMD14</name>
    <name type="synonym">POH1</name>
</gene>
<name>PSDE_HUMAN</name>
<keyword id="KW-0002">3D-structure</keyword>
<keyword id="KW-0903">Direct protein sequencing</keyword>
<keyword id="KW-0227">DNA damage</keyword>
<keyword id="KW-0234">DNA repair</keyword>
<keyword id="KW-0378">Hydrolase</keyword>
<keyword id="KW-0479">Metal-binding</keyword>
<keyword id="KW-0482">Metalloprotease</keyword>
<keyword id="KW-0597">Phosphoprotein</keyword>
<keyword id="KW-0645">Protease</keyword>
<keyword id="KW-0647">Proteasome</keyword>
<keyword id="KW-1267">Proteomics identification</keyword>
<keyword id="KW-1185">Reference proteome</keyword>
<keyword id="KW-0833">Ubl conjugation pathway</keyword>
<keyword id="KW-0862">Zinc</keyword>
<protein>
    <recommendedName>
        <fullName>26S proteasome non-ATPase regulatory subunit 14</fullName>
        <ecNumber>3.4.19.-</ecNumber>
    </recommendedName>
    <alternativeName>
        <fullName>26S proteasome regulatory subunit RPN11</fullName>
    </alternativeName>
    <alternativeName>
        <fullName>26S proteasome-associated PAD1 homolog 1</fullName>
    </alternativeName>
</protein>